<keyword id="KW-1003">Cell membrane</keyword>
<keyword id="KW-0444">Lipid biosynthesis</keyword>
<keyword id="KW-0443">Lipid metabolism</keyword>
<keyword id="KW-0460">Magnesium</keyword>
<keyword id="KW-0472">Membrane</keyword>
<keyword id="KW-0594">Phospholipid biosynthesis</keyword>
<keyword id="KW-1208">Phospholipid metabolism</keyword>
<keyword id="KW-0808">Transferase</keyword>
<keyword id="KW-0812">Transmembrane</keyword>
<keyword id="KW-1133">Transmembrane helix</keyword>
<reference key="1">
    <citation type="journal article" date="2008" name="Genomics">
        <title>Evolution in the laboratory: the genome of Halobacterium salinarum strain R1 compared to that of strain NRC-1.</title>
        <authorList>
            <person name="Pfeiffer F."/>
            <person name="Schuster S.C."/>
            <person name="Broicher A."/>
            <person name="Falb M."/>
            <person name="Palm P."/>
            <person name="Rodewald K."/>
            <person name="Ruepp A."/>
            <person name="Soppa J."/>
            <person name="Tittor J."/>
            <person name="Oesterhelt D."/>
        </authorList>
    </citation>
    <scope>NUCLEOTIDE SEQUENCE [LARGE SCALE GENOMIC DNA]</scope>
    <source>
        <strain>ATCC 29341 / DSM 671 / R1</strain>
    </source>
</reference>
<evidence type="ECO:0000255" key="1">
    <source>
        <dbReference type="HAMAP-Rule" id="MF_01117"/>
    </source>
</evidence>
<protein>
    <recommendedName>
        <fullName evidence="1">CDP-archaeol synthase</fullName>
        <ecNumber evidence="1">2.7.7.67</ecNumber>
    </recommendedName>
    <alternativeName>
        <fullName evidence="1">CDP-2,3-bis-(O-geranylgeranyl)-sn-glycerol synthase</fullName>
    </alternativeName>
</protein>
<accession>B0R737</accession>
<name>CDPAS_HALS3</name>
<proteinExistence type="inferred from homology"/>
<dbReference type="EC" id="2.7.7.67" evidence="1"/>
<dbReference type="EMBL" id="AM774415">
    <property type="protein sequence ID" value="CAP14556.1"/>
    <property type="molecule type" value="Genomic_DNA"/>
</dbReference>
<dbReference type="RefSeq" id="WP_012289436.1">
    <property type="nucleotide sequence ID" value="NC_010364.1"/>
</dbReference>
<dbReference type="SMR" id="B0R737"/>
<dbReference type="EnsemblBacteria" id="CAP14556">
    <property type="protein sequence ID" value="CAP14556"/>
    <property type="gene ID" value="OE_3954R"/>
</dbReference>
<dbReference type="KEGG" id="hsl:OE_3954R"/>
<dbReference type="HOGENOM" id="CLU_105710_0_0_2"/>
<dbReference type="PhylomeDB" id="B0R737"/>
<dbReference type="UniPathway" id="UPA00940"/>
<dbReference type="Proteomes" id="UP000001321">
    <property type="component" value="Chromosome"/>
</dbReference>
<dbReference type="GO" id="GO:0005886">
    <property type="term" value="C:plasma membrane"/>
    <property type="evidence" value="ECO:0007669"/>
    <property type="project" value="UniProtKB-SubCell"/>
</dbReference>
<dbReference type="GO" id="GO:0043338">
    <property type="term" value="F:CDP-2,3-bis-(O-geranylgeranyl)-sn-glycerol synthase activity"/>
    <property type="evidence" value="ECO:0007669"/>
    <property type="project" value="UniProtKB-EC"/>
</dbReference>
<dbReference type="GO" id="GO:0046474">
    <property type="term" value="P:glycerophospholipid biosynthetic process"/>
    <property type="evidence" value="ECO:0007669"/>
    <property type="project" value="UniProtKB-UniRule"/>
</dbReference>
<dbReference type="HAMAP" id="MF_01117">
    <property type="entry name" value="CDP_archaeol_synth"/>
    <property type="match status" value="1"/>
</dbReference>
<dbReference type="InterPro" id="IPR032690">
    <property type="entry name" value="CarS"/>
</dbReference>
<dbReference type="InterPro" id="IPR002726">
    <property type="entry name" value="CarS_archaea"/>
</dbReference>
<dbReference type="NCBIfam" id="NF003114">
    <property type="entry name" value="PRK04032.1"/>
    <property type="match status" value="1"/>
</dbReference>
<dbReference type="PANTHER" id="PTHR39650">
    <property type="entry name" value="CDP-ARCHAEOL SYNTHASE"/>
    <property type="match status" value="1"/>
</dbReference>
<dbReference type="PANTHER" id="PTHR39650:SF1">
    <property type="entry name" value="CDP-ARCHAEOL SYNTHASE"/>
    <property type="match status" value="1"/>
</dbReference>
<dbReference type="Pfam" id="PF01864">
    <property type="entry name" value="CarS-like"/>
    <property type="match status" value="1"/>
</dbReference>
<sequence length="181" mass="18243">MDLVGTVVVAVWAMLPAYVPNNAAVLAGGGRPIDGGRSLGGRRLLGDGKTWRGTAVGTAAGVALAVALNALRPAAADALGVVLPAFPPAAMGTLAFGAMVGDIAASFLKRRTGRQRGAAFPVVDQLDFVVVALALTALAVPAWVGDTFGLPVLVTVAVLTPALHLLTNGIAYALGVKDEPW</sequence>
<gene>
    <name evidence="1" type="primary">carS</name>
    <name type="ordered locus">OE_3954R</name>
</gene>
<comment type="function">
    <text evidence="1">Catalyzes the formation of CDP-2,3-bis-(O-geranylgeranyl)-sn-glycerol (CDP-archaeol) from 2,3-bis-(O-geranylgeranyl)-sn-glycerol 1-phosphate (DGGGP) and CTP. This reaction is the third ether-bond-formation step in the biosynthesis of archaeal membrane lipids.</text>
</comment>
<comment type="catalytic activity">
    <reaction evidence="1">
        <text>2,3-bis-O-(geranylgeranyl)-sn-glycerol 1-phosphate + CTP + H(+) = CDP-2,3-bis-O-(geranylgeranyl)-sn-glycerol + diphosphate</text>
        <dbReference type="Rhea" id="RHEA:25690"/>
        <dbReference type="ChEBI" id="CHEBI:15378"/>
        <dbReference type="ChEBI" id="CHEBI:33019"/>
        <dbReference type="ChEBI" id="CHEBI:37563"/>
        <dbReference type="ChEBI" id="CHEBI:58837"/>
        <dbReference type="ChEBI" id="CHEBI:58838"/>
        <dbReference type="EC" id="2.7.7.67"/>
    </reaction>
</comment>
<comment type="cofactor">
    <cofactor evidence="1">
        <name>Mg(2+)</name>
        <dbReference type="ChEBI" id="CHEBI:18420"/>
    </cofactor>
</comment>
<comment type="pathway">
    <text evidence="1">Membrane lipid metabolism; glycerophospholipid metabolism.</text>
</comment>
<comment type="subcellular location">
    <subcellularLocation>
        <location evidence="1">Cell membrane</location>
        <topology evidence="1">Multi-pass membrane protein</topology>
    </subcellularLocation>
</comment>
<comment type="similarity">
    <text evidence="1">Belongs to the CDP-archaeol synthase family.</text>
</comment>
<feature type="chain" id="PRO_1000137224" description="CDP-archaeol synthase">
    <location>
        <begin position="1"/>
        <end position="181"/>
    </location>
</feature>
<feature type="transmembrane region" description="Helical" evidence="1">
    <location>
        <begin position="7"/>
        <end position="27"/>
    </location>
</feature>
<feature type="transmembrane region" description="Helical" evidence="1">
    <location>
        <begin position="55"/>
        <end position="75"/>
    </location>
</feature>
<feature type="transmembrane region" description="Helical" evidence="1">
    <location>
        <begin position="80"/>
        <end position="100"/>
    </location>
</feature>
<feature type="transmembrane region" description="Helical" evidence="1">
    <location>
        <begin position="128"/>
        <end position="148"/>
    </location>
</feature>
<feature type="transmembrane region" description="Helical" evidence="1">
    <location>
        <begin position="150"/>
        <end position="170"/>
    </location>
</feature>
<organism>
    <name type="scientific">Halobacterium salinarum (strain ATCC 29341 / DSM 671 / R1)</name>
    <dbReference type="NCBI Taxonomy" id="478009"/>
    <lineage>
        <taxon>Archaea</taxon>
        <taxon>Methanobacteriati</taxon>
        <taxon>Methanobacteriota</taxon>
        <taxon>Stenosarchaea group</taxon>
        <taxon>Halobacteria</taxon>
        <taxon>Halobacteriales</taxon>
        <taxon>Halobacteriaceae</taxon>
        <taxon>Halobacterium</taxon>
        <taxon>Halobacterium salinarum NRC-34001</taxon>
    </lineage>
</organism>